<gene>
    <name type="primary">rnps1-b</name>
</gene>
<evidence type="ECO:0000250" key="1"/>
<evidence type="ECO:0000255" key="2">
    <source>
        <dbReference type="PROSITE-ProRule" id="PRU00176"/>
    </source>
</evidence>
<evidence type="ECO:0000256" key="3">
    <source>
        <dbReference type="SAM" id="MobiDB-lite"/>
    </source>
</evidence>
<evidence type="ECO:0000305" key="4"/>
<dbReference type="EMBL" id="BC106519">
    <property type="protein sequence ID" value="AAI06520.1"/>
    <property type="molecule type" value="mRNA"/>
</dbReference>
<dbReference type="RefSeq" id="NP_001090114.1">
    <property type="nucleotide sequence ID" value="NM_001096645.1"/>
</dbReference>
<dbReference type="SMR" id="Q3KPW1"/>
<dbReference type="BioGRID" id="592972">
    <property type="interactions" value="1"/>
</dbReference>
<dbReference type="IntAct" id="Q3KPW1">
    <property type="interactions" value="1"/>
</dbReference>
<dbReference type="DNASU" id="735191"/>
<dbReference type="GeneID" id="735191"/>
<dbReference type="KEGG" id="xla:735191"/>
<dbReference type="AGR" id="Xenbase:XB-GENE-6254260"/>
<dbReference type="CTD" id="735191"/>
<dbReference type="Xenbase" id="XB-GENE-6254260">
    <property type="gene designation" value="rnps1.L"/>
</dbReference>
<dbReference type="OrthoDB" id="252020at2759"/>
<dbReference type="Proteomes" id="UP000186698">
    <property type="component" value="Chromosome 9_10L"/>
</dbReference>
<dbReference type="Bgee" id="735191">
    <property type="expression patterns" value="Expressed in testis and 19 other cell types or tissues"/>
</dbReference>
<dbReference type="GO" id="GO:0061574">
    <property type="term" value="C:ASAP complex"/>
    <property type="evidence" value="ECO:0000318"/>
    <property type="project" value="GO_Central"/>
</dbReference>
<dbReference type="GO" id="GO:0005737">
    <property type="term" value="C:cytoplasm"/>
    <property type="evidence" value="ECO:0000318"/>
    <property type="project" value="GO_Central"/>
</dbReference>
<dbReference type="GO" id="GO:0016607">
    <property type="term" value="C:nuclear speck"/>
    <property type="evidence" value="ECO:0007669"/>
    <property type="project" value="UniProtKB-SubCell"/>
</dbReference>
<dbReference type="GO" id="GO:0005654">
    <property type="term" value="C:nucleoplasm"/>
    <property type="evidence" value="ECO:0000318"/>
    <property type="project" value="GO_Central"/>
</dbReference>
<dbReference type="GO" id="GO:0003723">
    <property type="term" value="F:RNA binding"/>
    <property type="evidence" value="ECO:0007669"/>
    <property type="project" value="UniProtKB-KW"/>
</dbReference>
<dbReference type="GO" id="GO:0000398">
    <property type="term" value="P:mRNA splicing, via spliceosome"/>
    <property type="evidence" value="ECO:0000318"/>
    <property type="project" value="GO_Central"/>
</dbReference>
<dbReference type="CDD" id="cd12365">
    <property type="entry name" value="RRM_RNPS1"/>
    <property type="match status" value="1"/>
</dbReference>
<dbReference type="Gene3D" id="3.30.70.330">
    <property type="match status" value="1"/>
</dbReference>
<dbReference type="InterPro" id="IPR012677">
    <property type="entry name" value="Nucleotide-bd_a/b_plait_sf"/>
</dbReference>
<dbReference type="InterPro" id="IPR035979">
    <property type="entry name" value="RBD_domain_sf"/>
</dbReference>
<dbReference type="InterPro" id="IPR034201">
    <property type="entry name" value="RNPS1_RRM"/>
</dbReference>
<dbReference type="InterPro" id="IPR000504">
    <property type="entry name" value="RRM_dom"/>
</dbReference>
<dbReference type="PANTHER" id="PTHR15481">
    <property type="entry name" value="RIBONUCLEIC ACID BINDING PROTEIN S1"/>
    <property type="match status" value="1"/>
</dbReference>
<dbReference type="PANTHER" id="PTHR15481:SF2">
    <property type="entry name" value="RNA-BINDING PROTEIN WITH SERINE-RICH DOMAIN 1"/>
    <property type="match status" value="1"/>
</dbReference>
<dbReference type="Pfam" id="PF00076">
    <property type="entry name" value="RRM_1"/>
    <property type="match status" value="1"/>
</dbReference>
<dbReference type="SMART" id="SM00360">
    <property type="entry name" value="RRM"/>
    <property type="match status" value="1"/>
</dbReference>
<dbReference type="SUPFAM" id="SSF54928">
    <property type="entry name" value="RNA-binding domain, RBD"/>
    <property type="match status" value="1"/>
</dbReference>
<dbReference type="PROSITE" id="PS50102">
    <property type="entry name" value="RRM"/>
    <property type="match status" value="1"/>
</dbReference>
<feature type="chain" id="PRO_0000378576" description="RNA-binding protein with serine-rich domain 1-B">
    <location>
        <begin position="1"/>
        <end position="283"/>
    </location>
</feature>
<feature type="domain" description="RRM" evidence="2">
    <location>
        <begin position="161"/>
        <end position="240"/>
    </location>
</feature>
<feature type="region of interest" description="Disordered" evidence="3">
    <location>
        <begin position="1"/>
        <end position="140"/>
    </location>
</feature>
<feature type="region of interest" description="Disordered" evidence="3">
    <location>
        <begin position="223"/>
        <end position="283"/>
    </location>
</feature>
<feature type="compositionally biased region" description="Basic and acidic residues" evidence="3">
    <location>
        <begin position="10"/>
        <end position="36"/>
    </location>
</feature>
<feature type="compositionally biased region" description="Low complexity" evidence="3">
    <location>
        <begin position="45"/>
        <end position="103"/>
    </location>
</feature>
<feature type="compositionally biased region" description="Basic residues" evidence="3">
    <location>
        <begin position="104"/>
        <end position="120"/>
    </location>
</feature>
<feature type="compositionally biased region" description="Basic residues" evidence="3">
    <location>
        <begin position="128"/>
        <end position="140"/>
    </location>
</feature>
<feature type="compositionally biased region" description="Basic residues" evidence="3">
    <location>
        <begin position="244"/>
        <end position="276"/>
    </location>
</feature>
<proteinExistence type="evidence at transcript level"/>
<reference key="1">
    <citation type="submission" date="2005-10" db="EMBL/GenBank/DDBJ databases">
        <authorList>
            <consortium name="NIH - Xenopus Gene Collection (XGC) project"/>
        </authorList>
    </citation>
    <scope>NUCLEOTIDE SEQUENCE [LARGE SCALE MRNA]</scope>
    <source>
        <tissue>Testis</tissue>
    </source>
</reference>
<organism>
    <name type="scientific">Xenopus laevis</name>
    <name type="common">African clawed frog</name>
    <dbReference type="NCBI Taxonomy" id="8355"/>
    <lineage>
        <taxon>Eukaryota</taxon>
        <taxon>Metazoa</taxon>
        <taxon>Chordata</taxon>
        <taxon>Craniata</taxon>
        <taxon>Vertebrata</taxon>
        <taxon>Euteleostomi</taxon>
        <taxon>Amphibia</taxon>
        <taxon>Batrachia</taxon>
        <taxon>Anura</taxon>
        <taxon>Pipoidea</taxon>
        <taxon>Pipidae</taxon>
        <taxon>Xenopodinae</taxon>
        <taxon>Xenopus</taxon>
        <taxon>Xenopus</taxon>
    </lineage>
</organism>
<protein>
    <recommendedName>
        <fullName>RNA-binding protein with serine-rich domain 1-B</fullName>
    </recommendedName>
</protein>
<name>RNP1B_XENLA</name>
<accession>Q3KPW1</accession>
<comment type="function">
    <text evidence="1">Component of a splicing-dependent multiprotein exon junction complex (EJC) deposited at splice junction on mRNAs. The EJC is a dynamic structure consisting of a few core proteins and several more peripheral nuclear and cytoplasmic associated factors that join the complex only transiently either during EJC assembly or during subsequent mRNA metabolism. Putative component of the spliceosome which enhances the formation of the ATP-dependent A complex of the spliceosome. May participate in mRNA 3'-end cleavage. Also mediates increase of mRNA abundance and translational efficiency (By similarity).</text>
</comment>
<comment type="subunit">
    <text evidence="1">Component of the active spliceosome.</text>
</comment>
<comment type="subcellular location">
    <subcellularLocation>
        <location evidence="1">Nucleus</location>
    </subcellularLocation>
    <subcellularLocation>
        <location evidence="1">Nucleus speckle</location>
    </subcellularLocation>
    <subcellularLocation>
        <location evidence="1">Cytoplasm</location>
    </subcellularLocation>
    <text evidence="1">Nucleocytoplasmic shuttling protein.</text>
</comment>
<comment type="similarity">
    <text evidence="4">Belongs to the splicing factor SR family.</text>
</comment>
<sequence length="283" mass="31742">MAPSPSKRKERSEDKAKERGKEKAPGKEATDKDRGRDKAKKRRSASSGSSSSSRSRSSSSSSSSSGSSSGSSSGSSSSASSRSGSSSSSRSSSSSSSSGSPSPSRRRHDNRRRSRSKSKQPKRDEKERKRRSPSPRPTKVHIGRLTRNVTKDHILEIFSTYGKIKMIDMPVDRYHPHLSKGYAYVEFEAPEEAEKALKHMDGGQIDGQEITASAVLTPWPMRAMPRRFSPPRRMLPPPPMWRRSPPRMRRRSRSPRRRSPVRRRSRSPARRRHRSRSSSNSSR</sequence>
<keyword id="KW-0963">Cytoplasm</keyword>
<keyword id="KW-0507">mRNA processing</keyword>
<keyword id="KW-0508">mRNA splicing</keyword>
<keyword id="KW-0539">Nucleus</keyword>
<keyword id="KW-1185">Reference proteome</keyword>
<keyword id="KW-0694">RNA-binding</keyword>